<organism>
    <name type="scientific">Escherichia fergusonii (strain ATCC 35469 / DSM 13698 / CCUG 18766 / IAM 14443 / JCM 21226 / LMG 7866 / NBRC 102419 / NCTC 12128 / CDC 0568-73)</name>
    <dbReference type="NCBI Taxonomy" id="585054"/>
    <lineage>
        <taxon>Bacteria</taxon>
        <taxon>Pseudomonadati</taxon>
        <taxon>Pseudomonadota</taxon>
        <taxon>Gammaproteobacteria</taxon>
        <taxon>Enterobacterales</taxon>
        <taxon>Enterobacteriaceae</taxon>
        <taxon>Escherichia</taxon>
    </lineage>
</organism>
<reference key="1">
    <citation type="journal article" date="2009" name="PLoS Genet.">
        <title>Organised genome dynamics in the Escherichia coli species results in highly diverse adaptive paths.</title>
        <authorList>
            <person name="Touchon M."/>
            <person name="Hoede C."/>
            <person name="Tenaillon O."/>
            <person name="Barbe V."/>
            <person name="Baeriswyl S."/>
            <person name="Bidet P."/>
            <person name="Bingen E."/>
            <person name="Bonacorsi S."/>
            <person name="Bouchier C."/>
            <person name="Bouvet O."/>
            <person name="Calteau A."/>
            <person name="Chiapello H."/>
            <person name="Clermont O."/>
            <person name="Cruveiller S."/>
            <person name="Danchin A."/>
            <person name="Diard M."/>
            <person name="Dossat C."/>
            <person name="Karoui M.E."/>
            <person name="Frapy E."/>
            <person name="Garry L."/>
            <person name="Ghigo J.M."/>
            <person name="Gilles A.M."/>
            <person name="Johnson J."/>
            <person name="Le Bouguenec C."/>
            <person name="Lescat M."/>
            <person name="Mangenot S."/>
            <person name="Martinez-Jehanne V."/>
            <person name="Matic I."/>
            <person name="Nassif X."/>
            <person name="Oztas S."/>
            <person name="Petit M.A."/>
            <person name="Pichon C."/>
            <person name="Rouy Z."/>
            <person name="Ruf C.S."/>
            <person name="Schneider D."/>
            <person name="Tourret J."/>
            <person name="Vacherie B."/>
            <person name="Vallenet D."/>
            <person name="Medigue C."/>
            <person name="Rocha E.P.C."/>
            <person name="Denamur E."/>
        </authorList>
    </citation>
    <scope>NUCLEOTIDE SEQUENCE [LARGE SCALE GENOMIC DNA]</scope>
    <source>
        <strain>ATCC 35469 / DSM 13698 / BCRC 15582 / CCUG 18766 / IAM 14443 / JCM 21226 / LMG 7866 / NBRC 102419 / NCTC 12128 / CDC 0568-73</strain>
    </source>
</reference>
<proteinExistence type="inferred from homology"/>
<keyword id="KW-0067">ATP-binding</keyword>
<keyword id="KW-0143">Chaperone</keyword>
<keyword id="KW-0963">Cytoplasm</keyword>
<keyword id="KW-0413">Isomerase</keyword>
<keyword id="KW-0547">Nucleotide-binding</keyword>
<protein>
    <recommendedName>
        <fullName evidence="1">Chaperonin GroEL</fullName>
        <ecNumber evidence="1">5.6.1.7</ecNumber>
    </recommendedName>
    <alternativeName>
        <fullName evidence="1">60 kDa chaperonin</fullName>
    </alternativeName>
    <alternativeName>
        <fullName evidence="1">Chaperonin-60</fullName>
        <shortName evidence="1">Cpn60</shortName>
    </alternativeName>
</protein>
<name>CH60_ESCF3</name>
<sequence length="548" mass="57387">MAAKDVKFGNDARVKMLRGVNVLADAVKVTLGPKGRNVVLDKSFGAPTITKDGVSVAREIELEDKFENMGAQMVKEVASKANDTAGDGTTTATVLAQAIITEGLKAVAAGMNPMDLKRGIDKAVTAAVEELKALSVPCSDSKAIAQVGTISANSDETVGKLIAEAMDKVGKEGVITVEDGTGLQDELDVVEGMQFDRGYLSPYFINKPETGAVELESPFILLADKKISNIREMLPVLEAVAKAGKPLLIIAEDVEGEALATLVVNTMRGIVKVAAVKAPGFGDRRKAMLQDIATLTGGTVISEEIGMELEKATLEDLGQAKRVVINKDTTTIIDGVGEEAAIQGRVAQIRQQIEEATSDYDREKLQERVAKLAGGVAVIKVGAATEVEMKEKKARVEDALHATRAAVEEGVVAGGGVALIRVASKLADLRGQNEEQNVGIKVALRAMEAPLRQIVLNCGEEPSVVANTVKAGDGNYGYNAATEEYGNMIDMGILDPTKVTRSALQYAASVAGLMITTECMVTDLPKNDAADLGAAGGMGGMGGMGGMM</sequence>
<evidence type="ECO:0000255" key="1">
    <source>
        <dbReference type="HAMAP-Rule" id="MF_00600"/>
    </source>
</evidence>
<accession>B7LLS5</accession>
<comment type="function">
    <text evidence="1">Together with its co-chaperonin GroES, plays an essential role in assisting protein folding. The GroEL-GroES system forms a nano-cage that allows encapsulation of the non-native substrate proteins and provides a physical environment optimized to promote and accelerate protein folding.</text>
</comment>
<comment type="catalytic activity">
    <reaction evidence="1">
        <text>ATP + H2O + a folded polypeptide = ADP + phosphate + an unfolded polypeptide.</text>
        <dbReference type="EC" id="5.6.1.7"/>
    </reaction>
</comment>
<comment type="subunit">
    <text evidence="1">Forms a cylinder of 14 subunits composed of two heptameric rings stacked back-to-back. Interacts with the co-chaperonin GroES.</text>
</comment>
<comment type="subcellular location">
    <subcellularLocation>
        <location evidence="1">Cytoplasm</location>
    </subcellularLocation>
</comment>
<comment type="similarity">
    <text evidence="1">Belongs to the chaperonin (HSP60) family.</text>
</comment>
<feature type="chain" id="PRO_1000130016" description="Chaperonin GroEL">
    <location>
        <begin position="1"/>
        <end position="548"/>
    </location>
</feature>
<feature type="binding site" evidence="1">
    <location>
        <begin position="30"/>
        <end position="33"/>
    </location>
    <ligand>
        <name>ATP</name>
        <dbReference type="ChEBI" id="CHEBI:30616"/>
    </ligand>
</feature>
<feature type="binding site" evidence="1">
    <location>
        <position position="51"/>
    </location>
    <ligand>
        <name>ATP</name>
        <dbReference type="ChEBI" id="CHEBI:30616"/>
    </ligand>
</feature>
<feature type="binding site" evidence="1">
    <location>
        <begin position="87"/>
        <end position="91"/>
    </location>
    <ligand>
        <name>ATP</name>
        <dbReference type="ChEBI" id="CHEBI:30616"/>
    </ligand>
</feature>
<feature type="binding site" evidence="1">
    <location>
        <position position="415"/>
    </location>
    <ligand>
        <name>ATP</name>
        <dbReference type="ChEBI" id="CHEBI:30616"/>
    </ligand>
</feature>
<feature type="binding site" evidence="1">
    <location>
        <begin position="479"/>
        <end position="481"/>
    </location>
    <ligand>
        <name>ATP</name>
        <dbReference type="ChEBI" id="CHEBI:30616"/>
    </ligand>
</feature>
<feature type="binding site" evidence="1">
    <location>
        <position position="495"/>
    </location>
    <ligand>
        <name>ATP</name>
        <dbReference type="ChEBI" id="CHEBI:30616"/>
    </ligand>
</feature>
<gene>
    <name evidence="1" type="primary">groEL</name>
    <name evidence="1" type="synonym">groL</name>
    <name type="ordered locus">EFER_4195</name>
</gene>
<dbReference type="EC" id="5.6.1.7" evidence="1"/>
<dbReference type="EMBL" id="CU928158">
    <property type="protein sequence ID" value="CAQ91615.1"/>
    <property type="molecule type" value="Genomic_DNA"/>
</dbReference>
<dbReference type="RefSeq" id="WP_000729132.1">
    <property type="nucleotide sequence ID" value="NC_011740.1"/>
</dbReference>
<dbReference type="SMR" id="B7LLS5"/>
<dbReference type="GeneID" id="86944709"/>
<dbReference type="KEGG" id="efe:EFER_4195"/>
<dbReference type="HOGENOM" id="CLU_016503_3_0_6"/>
<dbReference type="OrthoDB" id="9766614at2"/>
<dbReference type="Proteomes" id="UP000000745">
    <property type="component" value="Chromosome"/>
</dbReference>
<dbReference type="GO" id="GO:0005737">
    <property type="term" value="C:cytoplasm"/>
    <property type="evidence" value="ECO:0007669"/>
    <property type="project" value="UniProtKB-SubCell"/>
</dbReference>
<dbReference type="GO" id="GO:0005524">
    <property type="term" value="F:ATP binding"/>
    <property type="evidence" value="ECO:0007669"/>
    <property type="project" value="UniProtKB-UniRule"/>
</dbReference>
<dbReference type="GO" id="GO:0140662">
    <property type="term" value="F:ATP-dependent protein folding chaperone"/>
    <property type="evidence" value="ECO:0007669"/>
    <property type="project" value="InterPro"/>
</dbReference>
<dbReference type="GO" id="GO:0016853">
    <property type="term" value="F:isomerase activity"/>
    <property type="evidence" value="ECO:0007669"/>
    <property type="project" value="UniProtKB-KW"/>
</dbReference>
<dbReference type="GO" id="GO:0051082">
    <property type="term" value="F:unfolded protein binding"/>
    <property type="evidence" value="ECO:0007669"/>
    <property type="project" value="UniProtKB-UniRule"/>
</dbReference>
<dbReference type="GO" id="GO:0042026">
    <property type="term" value="P:protein refolding"/>
    <property type="evidence" value="ECO:0007669"/>
    <property type="project" value="UniProtKB-UniRule"/>
</dbReference>
<dbReference type="CDD" id="cd03344">
    <property type="entry name" value="GroEL"/>
    <property type="match status" value="1"/>
</dbReference>
<dbReference type="FunFam" id="1.10.560.10:FF:000001">
    <property type="entry name" value="60 kDa chaperonin"/>
    <property type="match status" value="1"/>
</dbReference>
<dbReference type="FunFam" id="3.50.7.10:FF:000001">
    <property type="entry name" value="60 kDa chaperonin"/>
    <property type="match status" value="1"/>
</dbReference>
<dbReference type="Gene3D" id="3.50.7.10">
    <property type="entry name" value="GroEL"/>
    <property type="match status" value="1"/>
</dbReference>
<dbReference type="Gene3D" id="1.10.560.10">
    <property type="entry name" value="GroEL-like equatorial domain"/>
    <property type="match status" value="1"/>
</dbReference>
<dbReference type="Gene3D" id="3.30.260.10">
    <property type="entry name" value="TCP-1-like chaperonin intermediate domain"/>
    <property type="match status" value="1"/>
</dbReference>
<dbReference type="HAMAP" id="MF_00600">
    <property type="entry name" value="CH60"/>
    <property type="match status" value="1"/>
</dbReference>
<dbReference type="InterPro" id="IPR018370">
    <property type="entry name" value="Chaperonin_Cpn60_CS"/>
</dbReference>
<dbReference type="InterPro" id="IPR001844">
    <property type="entry name" value="Cpn60/GroEL"/>
</dbReference>
<dbReference type="InterPro" id="IPR002423">
    <property type="entry name" value="Cpn60/GroEL/TCP-1"/>
</dbReference>
<dbReference type="InterPro" id="IPR027409">
    <property type="entry name" value="GroEL-like_apical_dom_sf"/>
</dbReference>
<dbReference type="InterPro" id="IPR027413">
    <property type="entry name" value="GROEL-like_equatorial_sf"/>
</dbReference>
<dbReference type="InterPro" id="IPR027410">
    <property type="entry name" value="TCP-1-like_intermed_sf"/>
</dbReference>
<dbReference type="NCBIfam" id="TIGR02348">
    <property type="entry name" value="GroEL"/>
    <property type="match status" value="1"/>
</dbReference>
<dbReference type="NCBIfam" id="NF000592">
    <property type="entry name" value="PRK00013.1"/>
    <property type="match status" value="1"/>
</dbReference>
<dbReference type="NCBIfam" id="NF009487">
    <property type="entry name" value="PRK12849.1"/>
    <property type="match status" value="1"/>
</dbReference>
<dbReference type="NCBIfam" id="NF009488">
    <property type="entry name" value="PRK12850.1"/>
    <property type="match status" value="1"/>
</dbReference>
<dbReference type="NCBIfam" id="NF009489">
    <property type="entry name" value="PRK12851.1"/>
    <property type="match status" value="1"/>
</dbReference>
<dbReference type="PANTHER" id="PTHR45633">
    <property type="entry name" value="60 KDA HEAT SHOCK PROTEIN, MITOCHONDRIAL"/>
    <property type="match status" value="1"/>
</dbReference>
<dbReference type="Pfam" id="PF00118">
    <property type="entry name" value="Cpn60_TCP1"/>
    <property type="match status" value="1"/>
</dbReference>
<dbReference type="PRINTS" id="PR00298">
    <property type="entry name" value="CHAPERONIN60"/>
</dbReference>
<dbReference type="SUPFAM" id="SSF52029">
    <property type="entry name" value="GroEL apical domain-like"/>
    <property type="match status" value="1"/>
</dbReference>
<dbReference type="SUPFAM" id="SSF48592">
    <property type="entry name" value="GroEL equatorial domain-like"/>
    <property type="match status" value="1"/>
</dbReference>
<dbReference type="SUPFAM" id="SSF54849">
    <property type="entry name" value="GroEL-intermediate domain like"/>
    <property type="match status" value="1"/>
</dbReference>
<dbReference type="PROSITE" id="PS00296">
    <property type="entry name" value="CHAPERONINS_CPN60"/>
    <property type="match status" value="1"/>
</dbReference>